<proteinExistence type="inferred from homology"/>
<reference key="1">
    <citation type="journal article" date="2002" name="J. Biol. Inorg. Chem.">
        <title>Molecular characterization of Bacillus pasteurii UreE, a metal-binding chaperone for the assembly of the urease active site.</title>
        <authorList>
            <person name="Ciurli S."/>
            <person name="Safarov N."/>
            <person name="Miletti S."/>
            <person name="Dikiy A."/>
            <person name="Christensen S.K."/>
            <person name="Kornetzky K."/>
            <person name="Bryant D.A."/>
            <person name="Vandenberghe I."/>
            <person name="Devreese B."/>
            <person name="Samyn B."/>
            <person name="Remaut H."/>
            <person name="Van Beeumen J."/>
        </authorList>
    </citation>
    <scope>NUCLEOTIDE SEQUENCE [GENOMIC DNA]</scope>
    <source>
        <strain>ATCC 11859 / DSM 33 / NCIB 8841 / NCTC 4822</strain>
    </source>
</reference>
<reference key="2">
    <citation type="journal article" date="1995" name="Mol. Cells">
        <title>Genetic organization and nucleotide sequence of the ure gene cluster in Bacillus pasteurii.</title>
        <authorList>
            <person name="You J.-H."/>
            <person name="Kim J.-G."/>
            <person name="Song B.-H."/>
            <person name="Lee M.-H."/>
            <person name="Kim S.-D."/>
        </authorList>
    </citation>
    <scope>NUCLEOTIDE SEQUENCE [GENOMIC DNA] OF 33-159</scope>
    <source>
        <strain>ATCC 11859 / DSM 33 / NCIB 8841 / NCTC 4822</strain>
    </source>
</reference>
<protein>
    <recommendedName>
        <fullName evidence="1">Urease accessory protein UreF</fullName>
    </recommendedName>
</protein>
<organism>
    <name type="scientific">Sporosarcina pasteurii</name>
    <name type="common">Bacillus pasteurii</name>
    <dbReference type="NCBI Taxonomy" id="1474"/>
    <lineage>
        <taxon>Bacteria</taxon>
        <taxon>Bacillati</taxon>
        <taxon>Bacillota</taxon>
        <taxon>Bacilli</taxon>
        <taxon>Bacillales</taxon>
        <taxon>Caryophanaceae</taxon>
        <taxon>Sporosarcina</taxon>
    </lineage>
</organism>
<feature type="chain" id="PRO_0000067644" description="Urease accessory protein UreF">
    <location>
        <begin position="1"/>
        <end position="202"/>
    </location>
</feature>
<feature type="sequence conflict" description="In Ref. 2; AAA73988." evidence="2" ref="2">
    <original>AIIAQE</original>
    <variation>MQLSHK</variation>
    <location>
        <begin position="33"/>
        <end position="38"/>
    </location>
</feature>
<feature type="sequence conflict" description="In Ref. 2; AAA73988." evidence="2" ref="2">
    <original>TSLETFLYSSITSLVQNGVRAIPLGQNSGVQTIFSL</original>
    <variation>HRLNIPIFINNISCSKRCSCNSAWSK</variation>
    <location>
        <begin position="124"/>
        <end position="159"/>
    </location>
</feature>
<dbReference type="EMBL" id="AF361945">
    <property type="protein sequence ID" value="AAK43719.1"/>
    <property type="molecule type" value="Genomic_DNA"/>
</dbReference>
<dbReference type="EMBL" id="U29368">
    <property type="protein sequence ID" value="AAA73988.1"/>
    <property type="molecule type" value="Genomic_DNA"/>
</dbReference>
<dbReference type="SMR" id="Q45345"/>
<dbReference type="GO" id="GO:0005737">
    <property type="term" value="C:cytoplasm"/>
    <property type="evidence" value="ECO:0007669"/>
    <property type="project" value="UniProtKB-SubCell"/>
</dbReference>
<dbReference type="GO" id="GO:0016151">
    <property type="term" value="F:nickel cation binding"/>
    <property type="evidence" value="ECO:0007669"/>
    <property type="project" value="UniProtKB-UniRule"/>
</dbReference>
<dbReference type="Gene3D" id="1.10.4190.10">
    <property type="entry name" value="Urease accessory protein UreF"/>
    <property type="match status" value="1"/>
</dbReference>
<dbReference type="HAMAP" id="MF_01385">
    <property type="entry name" value="UreF"/>
    <property type="match status" value="1"/>
</dbReference>
<dbReference type="InterPro" id="IPR002639">
    <property type="entry name" value="UreF"/>
</dbReference>
<dbReference type="InterPro" id="IPR038277">
    <property type="entry name" value="UreF_sf"/>
</dbReference>
<dbReference type="PANTHER" id="PTHR33620">
    <property type="entry name" value="UREASE ACCESSORY PROTEIN F"/>
    <property type="match status" value="1"/>
</dbReference>
<dbReference type="PANTHER" id="PTHR33620:SF1">
    <property type="entry name" value="UREASE ACCESSORY PROTEIN F"/>
    <property type="match status" value="1"/>
</dbReference>
<dbReference type="Pfam" id="PF01730">
    <property type="entry name" value="UreF"/>
    <property type="match status" value="1"/>
</dbReference>
<dbReference type="PIRSF" id="PIRSF009467">
    <property type="entry name" value="Ureas_acces_UreF"/>
    <property type="match status" value="1"/>
</dbReference>
<evidence type="ECO:0000255" key="1">
    <source>
        <dbReference type="HAMAP-Rule" id="MF_01385"/>
    </source>
</evidence>
<evidence type="ECO:0000305" key="2"/>
<gene>
    <name evidence="1" type="primary">ureF</name>
</gene>
<name>UREF_SPOPA</name>
<sequence>METYIQESDISNEDDLKAFCDMYLRQNLASTDAIIAQEAYRLAKENDLQGLIRLENICHAIKLSPETRKGSMMMGRQFLQTVQPLNNSELFTIWCEKLKNKEIKSHYPVVYGIYTAMLGVDLRTSLETFLYSSITSLVQNGVRAIPLGQNSGVQTIFSLLPVIQETTSRVMTLDLEHLDNNSIGLEIASMKHEFLHSRLFIS</sequence>
<keyword id="KW-0143">Chaperone</keyword>
<keyword id="KW-0963">Cytoplasm</keyword>
<keyword id="KW-0996">Nickel insertion</keyword>
<comment type="function">
    <text evidence="1">Required for maturation of urease via the functional incorporation of the urease nickel metallocenter.</text>
</comment>
<comment type="subunit">
    <text evidence="1">UreD, UreF and UreG form a complex that acts as a GTP-hydrolysis-dependent molecular chaperone, activating the urease apoprotein by helping to assemble the nickel containing metallocenter of UreC. The UreE protein probably delivers the nickel.</text>
</comment>
<comment type="subcellular location">
    <subcellularLocation>
        <location evidence="1">Cytoplasm</location>
    </subcellularLocation>
</comment>
<comment type="similarity">
    <text evidence="1">Belongs to the UreF family.</text>
</comment>
<accession>Q45345</accession>
<accession>Q93KP9</accession>